<accession>C4R5N0</accession>
<protein>
    <recommendedName>
        <fullName>Structure-specific endonuclease subunit SLX4</fullName>
    </recommendedName>
</protein>
<feature type="chain" id="PRO_0000388042" description="Structure-specific endonuclease subunit SLX4">
    <location>
        <begin position="1"/>
        <end position="652"/>
    </location>
</feature>
<feature type="region of interest" description="Disordered" evidence="2">
    <location>
        <begin position="1"/>
        <end position="23"/>
    </location>
</feature>
<feature type="region of interest" description="Disordered" evidence="2">
    <location>
        <begin position="37"/>
        <end position="64"/>
    </location>
</feature>
<feature type="region of interest" description="Disordered" evidence="2">
    <location>
        <begin position="303"/>
        <end position="353"/>
    </location>
</feature>
<feature type="region of interest" description="Disordered" evidence="2">
    <location>
        <begin position="553"/>
        <end position="574"/>
    </location>
</feature>
<feature type="compositionally biased region" description="Polar residues" evidence="2">
    <location>
        <begin position="1"/>
        <end position="10"/>
    </location>
</feature>
<proteinExistence type="inferred from homology"/>
<organism>
    <name type="scientific">Komagataella phaffii (strain GS115 / ATCC 20864)</name>
    <name type="common">Yeast</name>
    <name type="synonym">Pichia pastoris</name>
    <dbReference type="NCBI Taxonomy" id="644223"/>
    <lineage>
        <taxon>Eukaryota</taxon>
        <taxon>Fungi</taxon>
        <taxon>Dikarya</taxon>
        <taxon>Ascomycota</taxon>
        <taxon>Saccharomycotina</taxon>
        <taxon>Pichiomycetes</taxon>
        <taxon>Pichiales</taxon>
        <taxon>Pichiaceae</taxon>
        <taxon>Komagataella</taxon>
    </lineage>
</organism>
<dbReference type="EMBL" id="FN392321">
    <property type="protein sequence ID" value="CAY70866.1"/>
    <property type="molecule type" value="Genomic_DNA"/>
</dbReference>
<dbReference type="RefSeq" id="XP_002493045.1">
    <property type="nucleotide sequence ID" value="XM_002493000.1"/>
</dbReference>
<dbReference type="FunCoup" id="C4R5N0">
    <property type="interactions" value="37"/>
</dbReference>
<dbReference type="EnsemblFungi" id="CAY70866">
    <property type="protein sequence ID" value="CAY70866"/>
    <property type="gene ID" value="PAS_chr3_0813"/>
</dbReference>
<dbReference type="GeneID" id="8200307"/>
<dbReference type="KEGG" id="ppa:PAS_chr3_0813"/>
<dbReference type="HOGENOM" id="CLU_429039_0_0_1"/>
<dbReference type="InParanoid" id="C4R5N0"/>
<dbReference type="OrthoDB" id="5349119at2759"/>
<dbReference type="Proteomes" id="UP000000314">
    <property type="component" value="Chromosome 3"/>
</dbReference>
<dbReference type="GO" id="GO:0033557">
    <property type="term" value="C:Slx1-Slx4 complex"/>
    <property type="evidence" value="ECO:0007669"/>
    <property type="project" value="InterPro"/>
</dbReference>
<dbReference type="GO" id="GO:0006310">
    <property type="term" value="P:DNA recombination"/>
    <property type="evidence" value="ECO:0007669"/>
    <property type="project" value="UniProtKB-KW"/>
</dbReference>
<dbReference type="GO" id="GO:0006281">
    <property type="term" value="P:DNA repair"/>
    <property type="evidence" value="ECO:0007669"/>
    <property type="project" value="UniProtKB-KW"/>
</dbReference>
<dbReference type="GO" id="GO:0006260">
    <property type="term" value="P:DNA replication"/>
    <property type="evidence" value="ECO:0007669"/>
    <property type="project" value="InterPro"/>
</dbReference>
<dbReference type="InterPro" id="IPR018574">
    <property type="entry name" value="Structure-sp_endonuc_su_Slx4"/>
</dbReference>
<dbReference type="Pfam" id="PF09494">
    <property type="entry name" value="Slx4"/>
    <property type="match status" value="1"/>
</dbReference>
<evidence type="ECO:0000250" key="1"/>
<evidence type="ECO:0000256" key="2">
    <source>
        <dbReference type="SAM" id="MobiDB-lite"/>
    </source>
</evidence>
<evidence type="ECO:0000305" key="3"/>
<sequence>MEFVSTQIQSAYEDYEEKERHDRDIKKKLASFKSAEFGHNFAEQTSQNSNPRKRKISEKSQKERPIRSLNAQVLNMFHGNVELIKQQRALLKVLSGKKRKVNEVLKHVENIELENSTTHRDKRKIAGTRINSSTFPDDFGEVLYTKNEWDLLINSIRIRFPRLSATSRKTLNMITEKYNERLHSAEVSIWDASSMPPIQLTSDDIRVLHDLKEDDETEPNELESISDTRSVILTLSQALKQDTSKIVEEEQNIEEVEGGMPLSQGVEDVPDSEPEVLAKNERSIISLNSDMIVQSSQVEPIILSSDAGTPQRRRDSSQLTQPLEEPILTTHLKSSPALSKHSKTPTSTQSPIKLPFNFRESTPAIDQLPSFLDDWRGAVVSDESQEVVYSTAQNHSQTKSSAYSTARSNFEDNSTRKTLNTGENEDSITVLKKTIVPFYGKINPEKEIVYHSIEENEEGETREIKSKLMDRMRLPNNEEINVIPDSESDSEHDVSFLEVISVVKRREPELEGDFSGFNTNLFNPPRQDTLISLDENDSEEVFRSQSQNYIQLNNTQDQTQDPTSKQREPTNTQLEPDNEVVNDEETFEKWKLLLKSNPEIYQQIVTFKPLFLSEIIKFLEANGFLMPKPKDVNLLKRFLDTQSVCFTERARK</sequence>
<reference key="1">
    <citation type="journal article" date="2009" name="Nat. Biotechnol.">
        <title>Genome sequence of the recombinant protein production host Pichia pastoris.</title>
        <authorList>
            <person name="De Schutter K."/>
            <person name="Lin Y.-C."/>
            <person name="Tiels P."/>
            <person name="Van Hecke A."/>
            <person name="Glinka S."/>
            <person name="Weber-Lehmann J."/>
            <person name="Rouze P."/>
            <person name="Van de Peer Y."/>
            <person name="Callewaert N."/>
        </authorList>
    </citation>
    <scope>NUCLEOTIDE SEQUENCE [LARGE SCALE GENOMIC DNA]</scope>
    <source>
        <strain>GS115 / ATCC 20864</strain>
    </source>
</reference>
<comment type="function">
    <text evidence="1">Regulatory subunit of the SLX1-SLX4 structure-specific endonuclease that resolves DNA secondary structures generated during DNA repair and recombination. Has endonuclease activity towards branched DNA substrates, introducing single-strand cuts in duplex DNA close to junctions with ss-DNA (By similarity).</text>
</comment>
<comment type="subunit">
    <text evidence="1">Forms a heterodimer with SLX1.</text>
</comment>
<comment type="subcellular location">
    <subcellularLocation>
        <location evidence="1">Nucleus</location>
    </subcellularLocation>
</comment>
<comment type="PTM">
    <text evidence="1">Phosphorylated in response to DNA damage.</text>
</comment>
<comment type="similarity">
    <text evidence="3">Belongs to the SLX4 family.</text>
</comment>
<gene>
    <name type="primary">SLX4</name>
    <name type="ordered locus">PAS_chr3_0813</name>
</gene>
<name>SLX4_KOMPG</name>
<keyword id="KW-0227">DNA damage</keyword>
<keyword id="KW-0233">DNA recombination</keyword>
<keyword id="KW-0234">DNA repair</keyword>
<keyword id="KW-0539">Nucleus</keyword>
<keyword id="KW-0597">Phosphoprotein</keyword>
<keyword id="KW-1185">Reference proteome</keyword>